<accession>A2ELE6</accession>
<comment type="function">
    <text evidence="3">Dolichyl-phosphate beta-glucosyltransferase involved in the glycosylation of glycoproteins through the synthesis of dolichyl beta-D-glucosyl phosphate which serves as a sugar donor for transfer of three glucose residues to the Man-9-GlcNAc-2-PP-dolichol precursor to N-glycans.</text>
</comment>
<comment type="catalytic activity">
    <reaction evidence="3">
        <text>a di-trans,poly-cis-dolichyl phosphate + UDP-alpha-D-glucose = a di-trans,poly-cis-dolichyl beta-D-glucosyl phosphate + UDP</text>
        <dbReference type="Rhea" id="RHEA:15401"/>
        <dbReference type="Rhea" id="RHEA-COMP:19498"/>
        <dbReference type="Rhea" id="RHEA-COMP:19502"/>
        <dbReference type="ChEBI" id="CHEBI:57525"/>
        <dbReference type="ChEBI" id="CHEBI:57683"/>
        <dbReference type="ChEBI" id="CHEBI:58223"/>
        <dbReference type="ChEBI" id="CHEBI:58885"/>
        <dbReference type="EC" id="2.4.1.117"/>
    </reaction>
    <physiologicalReaction direction="left-to-right" evidence="7">
        <dbReference type="Rhea" id="RHEA:15402"/>
    </physiologicalReaction>
</comment>
<comment type="pathway">
    <text evidence="3">Protein modification; protein glycosylation.</text>
</comment>
<comment type="subcellular location">
    <subcellularLocation>
        <location evidence="1">Endoplasmic reticulum membrane</location>
        <topology evidence="2">Single-pass membrane protein</topology>
    </subcellularLocation>
</comment>
<comment type="similarity">
    <text evidence="6">Belongs to the glycosyltransferase 2 family.</text>
</comment>
<feature type="chain" id="PRO_0000431407" description="Dolichyl-phosphate beta-glucosyltransferase ALG5C">
    <location>
        <begin position="1"/>
        <end position="337"/>
    </location>
</feature>
<feature type="topological domain" description="Lumenal" evidence="6">
    <location>
        <begin position="1"/>
        <end position="6"/>
    </location>
</feature>
<feature type="transmembrane region" description="Helical" evidence="2">
    <location>
        <begin position="7"/>
        <end position="27"/>
    </location>
</feature>
<feature type="topological domain" description="Cytoplasmic" evidence="6">
    <location>
        <begin position="28"/>
        <end position="337"/>
    </location>
</feature>
<dbReference type="EC" id="2.4.1.117" evidence="3"/>
<dbReference type="EMBL" id="DS113421">
    <property type="protein sequence ID" value="EAY06548.1"/>
    <property type="molecule type" value="Genomic_DNA"/>
</dbReference>
<dbReference type="RefSeq" id="XP_001318771.1">
    <property type="nucleotide sequence ID" value="XM_001318736.1"/>
</dbReference>
<dbReference type="SMR" id="A2ELE6"/>
<dbReference type="FunCoup" id="A2ELE6">
    <property type="interactions" value="465"/>
</dbReference>
<dbReference type="STRING" id="5722.A2ELE6"/>
<dbReference type="GlyCosmos" id="A2ELE6">
    <property type="glycosylation" value="1 site, No reported glycans"/>
</dbReference>
<dbReference type="KEGG" id="tva:TVAG_2v0274620"/>
<dbReference type="VEuPathDB" id="TrichDB:TVAG_358380"/>
<dbReference type="VEuPathDB" id="TrichDB:TVAGG3_0274620"/>
<dbReference type="eggNOG" id="KOG2977">
    <property type="taxonomic scope" value="Eukaryota"/>
</dbReference>
<dbReference type="InParanoid" id="A2ELE6"/>
<dbReference type="OrthoDB" id="3784at2759"/>
<dbReference type="UniPathway" id="UPA00378"/>
<dbReference type="Proteomes" id="UP000001542">
    <property type="component" value="Unassembled WGS sequence"/>
</dbReference>
<dbReference type="GO" id="GO:0005789">
    <property type="term" value="C:endoplasmic reticulum membrane"/>
    <property type="evidence" value="ECO:0000318"/>
    <property type="project" value="GO_Central"/>
</dbReference>
<dbReference type="GO" id="GO:0004581">
    <property type="term" value="F:dolichyl-phosphate beta-glucosyltransferase activity"/>
    <property type="evidence" value="ECO:0007669"/>
    <property type="project" value="UniProtKB-EC"/>
</dbReference>
<dbReference type="GO" id="GO:0006487">
    <property type="term" value="P:protein N-linked glycosylation"/>
    <property type="evidence" value="ECO:0000318"/>
    <property type="project" value="GO_Central"/>
</dbReference>
<dbReference type="CDD" id="cd04188">
    <property type="entry name" value="DPG_synthase"/>
    <property type="match status" value="1"/>
</dbReference>
<dbReference type="FunFam" id="3.90.550.10:FF:000303">
    <property type="entry name" value="Dolichyl-phosphate beta-glucosyltransferase ALG5D"/>
    <property type="match status" value="1"/>
</dbReference>
<dbReference type="Gene3D" id="3.90.550.10">
    <property type="entry name" value="Spore Coat Polysaccharide Biosynthesis Protein SpsA, Chain A"/>
    <property type="match status" value="1"/>
</dbReference>
<dbReference type="InterPro" id="IPR035518">
    <property type="entry name" value="DPG_synthase"/>
</dbReference>
<dbReference type="InterPro" id="IPR001173">
    <property type="entry name" value="Glyco_trans_2-like"/>
</dbReference>
<dbReference type="InterPro" id="IPR029044">
    <property type="entry name" value="Nucleotide-diphossugar_trans"/>
</dbReference>
<dbReference type="PANTHER" id="PTHR10859:SF91">
    <property type="entry name" value="DOLICHYL-PHOSPHATE BETA-GLUCOSYLTRANSFERASE"/>
    <property type="match status" value="1"/>
</dbReference>
<dbReference type="PANTHER" id="PTHR10859">
    <property type="entry name" value="GLYCOSYL TRANSFERASE"/>
    <property type="match status" value="1"/>
</dbReference>
<dbReference type="Pfam" id="PF00535">
    <property type="entry name" value="Glycos_transf_2"/>
    <property type="match status" value="1"/>
</dbReference>
<dbReference type="SUPFAM" id="SSF53448">
    <property type="entry name" value="Nucleotide-diphospho-sugar transferases"/>
    <property type="match status" value="1"/>
</dbReference>
<reference key="1">
    <citation type="journal article" date="2007" name="Science">
        <title>Draft genome sequence of the sexually transmitted pathogen Trichomonas vaginalis.</title>
        <authorList>
            <person name="Carlton J.M."/>
            <person name="Hirt R.P."/>
            <person name="Silva J.C."/>
            <person name="Delcher A.L."/>
            <person name="Schatz M."/>
            <person name="Zhao Q."/>
            <person name="Wortman J.R."/>
            <person name="Bidwell S.L."/>
            <person name="Alsmark U.C.M."/>
            <person name="Besteiro S."/>
            <person name="Sicheritz-Ponten T."/>
            <person name="Noel C.J."/>
            <person name="Dacks J.B."/>
            <person name="Foster P.G."/>
            <person name="Simillion C."/>
            <person name="Van de Peer Y."/>
            <person name="Miranda-Saavedra D."/>
            <person name="Barton G.J."/>
            <person name="Westrop G.D."/>
            <person name="Mueller S."/>
            <person name="Dessi D."/>
            <person name="Fiori P.L."/>
            <person name="Ren Q."/>
            <person name="Paulsen I."/>
            <person name="Zhang H."/>
            <person name="Bastida-Corcuera F.D."/>
            <person name="Simoes-Barbosa A."/>
            <person name="Brown M.T."/>
            <person name="Hayes R.D."/>
            <person name="Mukherjee M."/>
            <person name="Okumura C.Y."/>
            <person name="Schneider R."/>
            <person name="Smith A.J."/>
            <person name="Vanacova S."/>
            <person name="Villalvazo M."/>
            <person name="Haas B.J."/>
            <person name="Pertea M."/>
            <person name="Feldblyum T.V."/>
            <person name="Utterback T.R."/>
            <person name="Shu C.L."/>
            <person name="Osoegawa K."/>
            <person name="de Jong P.J."/>
            <person name="Hrdy I."/>
            <person name="Horvathova L."/>
            <person name="Zubacova Z."/>
            <person name="Dolezal P."/>
            <person name="Malik S.B."/>
            <person name="Logsdon J.M. Jr."/>
            <person name="Henze K."/>
            <person name="Gupta A."/>
            <person name="Wang C.C."/>
            <person name="Dunne R.L."/>
            <person name="Upcroft J.A."/>
            <person name="Upcroft P."/>
            <person name="White O."/>
            <person name="Salzberg S.L."/>
            <person name="Tang P."/>
            <person name="Chiu C.-H."/>
            <person name="Lee Y.-S."/>
            <person name="Embley T.M."/>
            <person name="Coombs G.H."/>
            <person name="Mottram J.C."/>
            <person name="Tachezy J."/>
            <person name="Fraser-Liggett C.M."/>
            <person name="Johnson P.J."/>
        </authorList>
    </citation>
    <scope>NUCLEOTIDE SEQUENCE [LARGE SCALE GENOMIC DNA]</scope>
    <source>
        <strain>ATCC PRA-98 / G3</strain>
    </source>
</reference>
<reference key="2">
    <citation type="journal article" date="2008" name="Eukaryot. Cell">
        <title>Dolichyl-phosphate-glucose is used to make O-glycans on glycoproteins of Trichomonas vaginalis.</title>
        <authorList>
            <person name="Grabinska K.A."/>
            <person name="Ghosh S.K."/>
            <person name="Guan Z."/>
            <person name="Cui J."/>
            <person name="Raetz C.R."/>
            <person name="Robbins P.W."/>
            <person name="Samuelson J."/>
        </authorList>
    </citation>
    <scope>FUNCTION</scope>
    <scope>CATALYTIC ACTIVITY</scope>
    <scope>PATHWAY</scope>
</reference>
<evidence type="ECO:0000250" key="1">
    <source>
        <dbReference type="UniProtKB" id="P40350"/>
    </source>
</evidence>
<evidence type="ECO:0000255" key="2"/>
<evidence type="ECO:0000269" key="3">
    <source>
    </source>
</evidence>
<evidence type="ECO:0000303" key="4">
    <source>
    </source>
</evidence>
<evidence type="ECO:0000303" key="5">
    <source>
    </source>
</evidence>
<evidence type="ECO:0000305" key="6"/>
<evidence type="ECO:0000305" key="7">
    <source>
    </source>
</evidence>
<proteinExistence type="evidence at protein level"/>
<name>ALG5C_TRIV3</name>
<keyword id="KW-0256">Endoplasmic reticulum</keyword>
<keyword id="KW-0328">Glycosyltransferase</keyword>
<keyword id="KW-0472">Membrane</keyword>
<keyword id="KW-1185">Reference proteome</keyword>
<keyword id="KW-0735">Signal-anchor</keyword>
<keyword id="KW-0808">Transferase</keyword>
<keyword id="KW-0812">Transmembrane</keyword>
<keyword id="KW-1133">Transmembrane helix</keyword>
<protein>
    <recommendedName>
        <fullName evidence="5">Dolichyl-phosphate beta-glucosyltransferase ALG5C</fullName>
        <shortName>DolP-glucosyltransferase</shortName>
        <ecNumber evidence="3">2.4.1.117</ecNumber>
    </recommendedName>
</protein>
<sequence length="337" mass="38118">MNDLPPIANLISNILFVLLIITFLYALCSRFVSDKTLYDYTILPTNDPEKINYYIEPSPSPKEKIPFPTVFSPSEVYTTFVVPAYNESKRITPMLDETVAYLERRASENPEFTWEIIVVNDGSKDNTAEIVTNYAFKHPQIRLLNQPKNMGKGAAVQAGCLHSRGELILMVDADGATKIDEFEELEKKIKSLTTINKEAIVVGSRAHLEGAEKANRTPLRKFLGLGFHMLITIAGVHGIKDTQCGFKLFTREAARWLFPNQHVQRWCFDPELLVIAQSRQMEVAEVPVEWNEIGDSKMKISGMIKMAIDLVQIAIYFRAGLWTVKDKADTPISDFEV</sequence>
<organism>
    <name type="scientific">Trichomonas vaginalis (strain ATCC PRA-98 / G3)</name>
    <dbReference type="NCBI Taxonomy" id="412133"/>
    <lineage>
        <taxon>Eukaryota</taxon>
        <taxon>Metamonada</taxon>
        <taxon>Parabasalia</taxon>
        <taxon>Trichomonadida</taxon>
        <taxon>Trichomonadidae</taxon>
        <taxon>Trichomonas</taxon>
    </lineage>
</organism>
<gene>
    <name evidence="5" type="primary">ALG5C</name>
    <name evidence="4" type="ORF">TVAG_358380</name>
</gene>